<name>PYCB_METTH</name>
<feature type="chain" id="PRO_0000146831" description="Pyruvate carboxylase subunit B">
    <location>
        <begin position="1"/>
        <end position="568"/>
    </location>
</feature>
<feature type="domain" description="Pyruvate carboxyltransferase" evidence="3">
    <location>
        <begin position="4"/>
        <end position="264"/>
    </location>
</feature>
<feature type="domain" description="Biotinyl-binding" evidence="2">
    <location>
        <begin position="493"/>
        <end position="568"/>
    </location>
</feature>
<feature type="binding site" evidence="1">
    <location>
        <begin position="12"/>
        <end position="16"/>
    </location>
    <ligand>
        <name>substrate</name>
    </ligand>
</feature>
<feature type="binding site" evidence="1">
    <location>
        <position position="13"/>
    </location>
    <ligand>
        <name>a divalent metal cation</name>
        <dbReference type="ChEBI" id="CHEBI:60240"/>
    </ligand>
</feature>
<feature type="binding site" evidence="1">
    <location>
        <position position="83"/>
    </location>
    <ligand>
        <name>substrate</name>
    </ligand>
</feature>
<feature type="binding site" description="via carbamate group" evidence="1">
    <location>
        <position position="174"/>
    </location>
    <ligand>
        <name>a divalent metal cation</name>
        <dbReference type="ChEBI" id="CHEBI:60240"/>
    </ligand>
</feature>
<feature type="binding site" evidence="1">
    <location>
        <position position="203"/>
    </location>
    <ligand>
        <name>a divalent metal cation</name>
        <dbReference type="ChEBI" id="CHEBI:60240"/>
    </ligand>
</feature>
<feature type="binding site" evidence="1">
    <location>
        <position position="205"/>
    </location>
    <ligand>
        <name>a divalent metal cation</name>
        <dbReference type="ChEBI" id="CHEBI:60240"/>
    </ligand>
</feature>
<feature type="binding site" evidence="1">
    <location>
        <position position="339"/>
    </location>
    <ligand>
        <name>substrate</name>
    </ligand>
</feature>
<feature type="modified residue" description="N6-carboxylysine" evidence="1">
    <location>
        <position position="174"/>
    </location>
</feature>
<feature type="modified residue" description="N6-biotinyllysine" evidence="1 2">
    <location>
        <position position="534"/>
    </location>
</feature>
<reference key="1">
    <citation type="journal article" date="1997" name="J. Bacteriol.">
        <title>Complete genome sequence of Methanobacterium thermoautotrophicum deltaH: functional analysis and comparative genomics.</title>
        <authorList>
            <person name="Smith D.R."/>
            <person name="Doucette-Stamm L.A."/>
            <person name="Deloughery C."/>
            <person name="Lee H.-M."/>
            <person name="Dubois J."/>
            <person name="Aldredge T."/>
            <person name="Bashirzadeh R."/>
            <person name="Blakely D."/>
            <person name="Cook R."/>
            <person name="Gilbert K."/>
            <person name="Harrison D."/>
            <person name="Hoang L."/>
            <person name="Keagle P."/>
            <person name="Lumm W."/>
            <person name="Pothier B."/>
            <person name="Qiu D."/>
            <person name="Spadafora R."/>
            <person name="Vicare R."/>
            <person name="Wang Y."/>
            <person name="Wierzbowski J."/>
            <person name="Gibson R."/>
            <person name="Jiwani N."/>
            <person name="Caruso A."/>
            <person name="Bush D."/>
            <person name="Safer H."/>
            <person name="Patwell D."/>
            <person name="Prabhakar S."/>
            <person name="McDougall S."/>
            <person name="Shimer G."/>
            <person name="Goyal A."/>
            <person name="Pietrovski S."/>
            <person name="Church G.M."/>
            <person name="Daniels C.J."/>
            <person name="Mao J.-I."/>
            <person name="Rice P."/>
            <person name="Noelling J."/>
            <person name="Reeve J.N."/>
        </authorList>
    </citation>
    <scope>NUCLEOTIDE SEQUENCE [LARGE SCALE GENOMIC DNA]</scope>
    <source>
        <strain>ATCC 29096 / DSM 1053 / JCM 10044 / NBRC 100330 / Delta H</strain>
    </source>
</reference>
<reference key="2">
    <citation type="journal article" date="1998" name="J. Biol. Chem.">
        <title>Purification, regulation, and molecular and biochemical characterization of pyruvate carboxylase from Methanobacterium thermoautotrophicum strain deltaH.</title>
        <authorList>
            <person name="Mukhopadhyay B."/>
            <person name="Stoddard S.F."/>
            <person name="Wolfe R.S."/>
        </authorList>
    </citation>
    <scope>NUCLEOTIDE SEQUENCE [GENOMIC DNA]</scope>
    <scope>PROTEIN SEQUENCE OF 1-20</scope>
    <source>
        <strain>ATCC 29096 / DSM 1053 / JCM 10044 / NBRC 100330 / Delta H</strain>
    </source>
</reference>
<keyword id="KW-0067">ATP-binding</keyword>
<keyword id="KW-0092">Biotin</keyword>
<keyword id="KW-0903">Direct protein sequencing</keyword>
<keyword id="KW-0312">Gluconeogenesis</keyword>
<keyword id="KW-0436">Ligase</keyword>
<keyword id="KW-0460">Magnesium</keyword>
<keyword id="KW-0479">Metal-binding</keyword>
<keyword id="KW-0511">Multifunctional enzyme</keyword>
<keyword id="KW-0547">Nucleotide-binding</keyword>
<keyword id="KW-0670">Pyruvate</keyword>
<keyword id="KW-1185">Reference proteome</keyword>
<accession>O27179</accession>
<organism>
    <name type="scientific">Methanothermobacter thermautotrophicus (strain ATCC 29096 / DSM 1053 / JCM 10044 / NBRC 100330 / Delta H)</name>
    <name type="common">Methanobacterium thermoautotrophicum</name>
    <dbReference type="NCBI Taxonomy" id="187420"/>
    <lineage>
        <taxon>Archaea</taxon>
        <taxon>Methanobacteriati</taxon>
        <taxon>Methanobacteriota</taxon>
        <taxon>Methanomada group</taxon>
        <taxon>Methanobacteria</taxon>
        <taxon>Methanobacteriales</taxon>
        <taxon>Methanobacteriaceae</taxon>
        <taxon>Methanothermobacter</taxon>
    </lineage>
</organism>
<gene>
    <name type="primary">pycB</name>
    <name type="ordered locus">MTH_1107</name>
</gene>
<evidence type="ECO:0000250" key="1"/>
<evidence type="ECO:0000255" key="2">
    <source>
        <dbReference type="PROSITE-ProRule" id="PRU01066"/>
    </source>
</evidence>
<evidence type="ECO:0000255" key="3">
    <source>
        <dbReference type="PROSITE-ProRule" id="PRU01151"/>
    </source>
</evidence>
<comment type="function">
    <text>Pyruvate carboxylase catalyzes a 2-step reaction, involving the ATP-dependent carboxylation of the covalently attached biotin in the first step and the transfer of the carboxyl group to pyruvate in the second.</text>
</comment>
<comment type="catalytic activity">
    <reaction>
        <text>hydrogencarbonate + pyruvate + ATP = oxaloacetate + ADP + phosphate + H(+)</text>
        <dbReference type="Rhea" id="RHEA:20844"/>
        <dbReference type="ChEBI" id="CHEBI:15361"/>
        <dbReference type="ChEBI" id="CHEBI:15378"/>
        <dbReference type="ChEBI" id="CHEBI:16452"/>
        <dbReference type="ChEBI" id="CHEBI:17544"/>
        <dbReference type="ChEBI" id="CHEBI:30616"/>
        <dbReference type="ChEBI" id="CHEBI:43474"/>
        <dbReference type="ChEBI" id="CHEBI:456216"/>
        <dbReference type="EC" id="6.4.1.1"/>
    </reaction>
</comment>
<comment type="cofactor">
    <cofactor>
        <name>Mg(2+)</name>
        <dbReference type="ChEBI" id="CHEBI:18420"/>
    </cofactor>
    <cofactor>
        <name>Mn(2+)</name>
        <dbReference type="ChEBI" id="CHEBI:29035"/>
    </cofactor>
    <cofactor>
        <name>Co(2+)</name>
        <dbReference type="ChEBI" id="CHEBI:48828"/>
    </cofactor>
</comment>
<comment type="activity regulation">
    <text>Inhibited by ADP and alpha-ketoglutarate.</text>
</comment>
<comment type="biophysicochemical properties">
    <phDependence>
        <text>Optimum pH is 8.</text>
    </phDependence>
    <temperatureDependence>
        <text>Optimum temperature is 60 degrees Celsius.</text>
    </temperatureDependence>
</comment>
<comment type="subunit">
    <text>Heterooctamer of four A and four B subunits.</text>
</comment>
<proteinExistence type="evidence at protein level"/>
<sequence length="568" mass="63955">MKGIKVVETAFRDAHQSLLATRLRTRDMTPIAEEMDRVGFFSLEAWGGATFDTCIRYLNEDPWERLRELKEHVKRTPIQMLLRGQNLVGYKHYPDDIVRKFIEKSYENGVDVFRIFDALNDIRNMEYAIKVAREQEAHVQGVICYTISPYHTLESYVDFARELEALECDSVAIKDMAGLISPHDAYELVRALKEETDLMVNLHCHCTSGMTPMSYYAACEAGVDILDTAISPLSWGASQPPTESIVAALRDTPYDTGLDLEILKNIKKYFEEIRKKYSSILDPIAEQIDTDVLIYQIPGGMLSNLVAQLKEQNALDRYEEVLEEMPRVRKDMGYPPLVTPTSQIVGIQAVMNVLSGERYSMVTNEVKDYFRGLYGRPPAPLNEEVARKVIGDEKPIDCRPADILKPQYDECRRKGEEMGIIEKEEDILTLALYPAIAPKFLRGEIEEEPLEPPAEEMAPTGEVPTVFHVEVDGDEFEVKVVPTGYMTIEEAEPEPVDVEGAVKSTMQGMVVKLKVSEGDQVNAGDVVAVVEAMKMENDIQTPHGGVVEKIYTAEGEKVETGDIIMVIK</sequence>
<protein>
    <recommendedName>
        <fullName>Pyruvate carboxylase subunit B</fullName>
        <ecNumber>6.4.1.1</ecNumber>
    </recommendedName>
    <alternativeName>
        <fullName>Pyruvic carboxylase B</fullName>
    </alternativeName>
</protein>
<dbReference type="EC" id="6.4.1.1"/>
<dbReference type="EMBL" id="AE000666">
    <property type="protein sequence ID" value="AAB85596.1"/>
    <property type="molecule type" value="Genomic_DNA"/>
</dbReference>
<dbReference type="EMBL" id="AF039105">
    <property type="protein sequence ID" value="AAC12719.1"/>
    <property type="molecule type" value="Genomic_DNA"/>
</dbReference>
<dbReference type="PIR" id="C69014">
    <property type="entry name" value="C69014"/>
</dbReference>
<dbReference type="SMR" id="O27179"/>
<dbReference type="FunCoup" id="O27179">
    <property type="interactions" value="124"/>
</dbReference>
<dbReference type="STRING" id="187420.MTH_1107"/>
<dbReference type="PaxDb" id="187420-MTH_1107"/>
<dbReference type="EnsemblBacteria" id="AAB85596">
    <property type="protein sequence ID" value="AAB85596"/>
    <property type="gene ID" value="MTH_1107"/>
</dbReference>
<dbReference type="KEGG" id="mth:MTH_1107"/>
<dbReference type="PATRIC" id="fig|187420.15.peg.1083"/>
<dbReference type="HOGENOM" id="CLU_000395_4_2_2"/>
<dbReference type="InParanoid" id="O27179"/>
<dbReference type="BioCyc" id="MetaCyc:MONOMER-14538"/>
<dbReference type="Proteomes" id="UP000005223">
    <property type="component" value="Chromosome"/>
</dbReference>
<dbReference type="GO" id="GO:0005737">
    <property type="term" value="C:cytoplasm"/>
    <property type="evidence" value="ECO:0007669"/>
    <property type="project" value="TreeGrafter"/>
</dbReference>
<dbReference type="GO" id="GO:0005524">
    <property type="term" value="F:ATP binding"/>
    <property type="evidence" value="ECO:0007669"/>
    <property type="project" value="UniProtKB-KW"/>
</dbReference>
<dbReference type="GO" id="GO:0046872">
    <property type="term" value="F:metal ion binding"/>
    <property type="evidence" value="ECO:0007669"/>
    <property type="project" value="UniProtKB-KW"/>
</dbReference>
<dbReference type="GO" id="GO:0008948">
    <property type="term" value="F:oxaloacetate decarboxylase activity"/>
    <property type="evidence" value="ECO:0007669"/>
    <property type="project" value="InterPro"/>
</dbReference>
<dbReference type="GO" id="GO:0004736">
    <property type="term" value="F:pyruvate carboxylase activity"/>
    <property type="evidence" value="ECO:0007669"/>
    <property type="project" value="UniProtKB-EC"/>
</dbReference>
<dbReference type="GO" id="GO:0006094">
    <property type="term" value="P:gluconeogenesis"/>
    <property type="evidence" value="ECO:0007669"/>
    <property type="project" value="UniProtKB-KW"/>
</dbReference>
<dbReference type="GO" id="GO:0006814">
    <property type="term" value="P:sodium ion transport"/>
    <property type="evidence" value="ECO:0007669"/>
    <property type="project" value="InterPro"/>
</dbReference>
<dbReference type="CDD" id="cd06850">
    <property type="entry name" value="biotinyl_domain"/>
    <property type="match status" value="1"/>
</dbReference>
<dbReference type="CDD" id="cd07937">
    <property type="entry name" value="DRE_TIM_PC_TC_5S"/>
    <property type="match status" value="1"/>
</dbReference>
<dbReference type="FunFam" id="2.40.50.100:FF:000003">
    <property type="entry name" value="Acetyl-CoA carboxylase biotin carboxyl carrier protein"/>
    <property type="match status" value="1"/>
</dbReference>
<dbReference type="Gene3D" id="2.40.50.100">
    <property type="match status" value="1"/>
</dbReference>
<dbReference type="Gene3D" id="3.20.20.70">
    <property type="entry name" value="Aldolase class I"/>
    <property type="match status" value="1"/>
</dbReference>
<dbReference type="InterPro" id="IPR013785">
    <property type="entry name" value="Aldolase_TIM"/>
</dbReference>
<dbReference type="InterPro" id="IPR000089">
    <property type="entry name" value="Biotin_lipoyl"/>
</dbReference>
<dbReference type="InterPro" id="IPR003379">
    <property type="entry name" value="Carboxylase_cons_dom"/>
</dbReference>
<dbReference type="InterPro" id="IPR005776">
    <property type="entry name" value="OadA"/>
</dbReference>
<dbReference type="InterPro" id="IPR055268">
    <property type="entry name" value="PCB-like"/>
</dbReference>
<dbReference type="InterPro" id="IPR000891">
    <property type="entry name" value="PYR_CT"/>
</dbReference>
<dbReference type="InterPro" id="IPR011053">
    <property type="entry name" value="Single_hybrid_motif"/>
</dbReference>
<dbReference type="NCBIfam" id="TIGR01108">
    <property type="entry name" value="oadA"/>
    <property type="match status" value="1"/>
</dbReference>
<dbReference type="NCBIfam" id="NF006761">
    <property type="entry name" value="PRK09282.1"/>
    <property type="match status" value="1"/>
</dbReference>
<dbReference type="PANTHER" id="PTHR43778">
    <property type="entry name" value="PYRUVATE CARBOXYLASE"/>
    <property type="match status" value="1"/>
</dbReference>
<dbReference type="PANTHER" id="PTHR43778:SF2">
    <property type="entry name" value="PYRUVATE CARBOXYLASE, MITOCHONDRIAL"/>
    <property type="match status" value="1"/>
</dbReference>
<dbReference type="Pfam" id="PF00364">
    <property type="entry name" value="Biotin_lipoyl"/>
    <property type="match status" value="1"/>
</dbReference>
<dbReference type="Pfam" id="PF00682">
    <property type="entry name" value="HMGL-like"/>
    <property type="match status" value="1"/>
</dbReference>
<dbReference type="Pfam" id="PF02436">
    <property type="entry name" value="PYC_OADA"/>
    <property type="match status" value="1"/>
</dbReference>
<dbReference type="SUPFAM" id="SSF51569">
    <property type="entry name" value="Aldolase"/>
    <property type="match status" value="1"/>
</dbReference>
<dbReference type="SUPFAM" id="SSF89000">
    <property type="entry name" value="post-HMGL domain-like"/>
    <property type="match status" value="1"/>
</dbReference>
<dbReference type="SUPFAM" id="SSF51230">
    <property type="entry name" value="Single hybrid motif"/>
    <property type="match status" value="1"/>
</dbReference>
<dbReference type="PROSITE" id="PS50968">
    <property type="entry name" value="BIOTINYL_LIPOYL"/>
    <property type="match status" value="1"/>
</dbReference>
<dbReference type="PROSITE" id="PS50991">
    <property type="entry name" value="PYR_CT"/>
    <property type="match status" value="1"/>
</dbReference>